<organism>
    <name type="scientific">Actinobacillus pleuropneumoniae serotype 7 (strain AP76)</name>
    <dbReference type="NCBI Taxonomy" id="537457"/>
    <lineage>
        <taxon>Bacteria</taxon>
        <taxon>Pseudomonadati</taxon>
        <taxon>Pseudomonadota</taxon>
        <taxon>Gammaproteobacteria</taxon>
        <taxon>Pasteurellales</taxon>
        <taxon>Pasteurellaceae</taxon>
        <taxon>Actinobacillus</taxon>
    </lineage>
</organism>
<keyword id="KW-0963">Cytoplasm</keyword>
<keyword id="KW-0342">GTP-binding</keyword>
<keyword id="KW-0396">Initiation factor</keyword>
<keyword id="KW-0547">Nucleotide-binding</keyword>
<keyword id="KW-0648">Protein biosynthesis</keyword>
<proteinExistence type="inferred from homology"/>
<name>IF2_ACTP7</name>
<dbReference type="EMBL" id="CP001091">
    <property type="protein sequence ID" value="ACE61332.1"/>
    <property type="molecule type" value="Genomic_DNA"/>
</dbReference>
<dbReference type="RefSeq" id="WP_005600786.1">
    <property type="nucleotide sequence ID" value="NC_010939.1"/>
</dbReference>
<dbReference type="SMR" id="B3H163"/>
<dbReference type="KEGG" id="apa:APP7_0680"/>
<dbReference type="HOGENOM" id="CLU_006301_6_3_6"/>
<dbReference type="Proteomes" id="UP000001226">
    <property type="component" value="Chromosome"/>
</dbReference>
<dbReference type="GO" id="GO:0005829">
    <property type="term" value="C:cytosol"/>
    <property type="evidence" value="ECO:0007669"/>
    <property type="project" value="TreeGrafter"/>
</dbReference>
<dbReference type="GO" id="GO:0005525">
    <property type="term" value="F:GTP binding"/>
    <property type="evidence" value="ECO:0007669"/>
    <property type="project" value="UniProtKB-KW"/>
</dbReference>
<dbReference type="GO" id="GO:0003924">
    <property type="term" value="F:GTPase activity"/>
    <property type="evidence" value="ECO:0007669"/>
    <property type="project" value="UniProtKB-UniRule"/>
</dbReference>
<dbReference type="GO" id="GO:0097216">
    <property type="term" value="F:guanosine tetraphosphate binding"/>
    <property type="evidence" value="ECO:0007669"/>
    <property type="project" value="UniProtKB-ARBA"/>
</dbReference>
<dbReference type="GO" id="GO:0003743">
    <property type="term" value="F:translation initiation factor activity"/>
    <property type="evidence" value="ECO:0007669"/>
    <property type="project" value="UniProtKB-UniRule"/>
</dbReference>
<dbReference type="CDD" id="cd01887">
    <property type="entry name" value="IF2_eIF5B"/>
    <property type="match status" value="1"/>
</dbReference>
<dbReference type="CDD" id="cd03702">
    <property type="entry name" value="IF2_mtIF2_II"/>
    <property type="match status" value="1"/>
</dbReference>
<dbReference type="CDD" id="cd03692">
    <property type="entry name" value="mtIF2_IVc"/>
    <property type="match status" value="1"/>
</dbReference>
<dbReference type="FunFam" id="2.40.30.10:FF:000007">
    <property type="entry name" value="Translation initiation factor IF-2"/>
    <property type="match status" value="1"/>
</dbReference>
<dbReference type="FunFam" id="2.40.30.10:FF:000008">
    <property type="entry name" value="Translation initiation factor IF-2"/>
    <property type="match status" value="1"/>
</dbReference>
<dbReference type="FunFam" id="3.40.50.10050:FF:000001">
    <property type="entry name" value="Translation initiation factor IF-2"/>
    <property type="match status" value="1"/>
</dbReference>
<dbReference type="FunFam" id="3.40.50.300:FF:000019">
    <property type="entry name" value="Translation initiation factor IF-2"/>
    <property type="match status" value="1"/>
</dbReference>
<dbReference type="Gene3D" id="3.40.50.300">
    <property type="entry name" value="P-loop containing nucleotide triphosphate hydrolases"/>
    <property type="match status" value="1"/>
</dbReference>
<dbReference type="Gene3D" id="2.40.30.10">
    <property type="entry name" value="Translation factors"/>
    <property type="match status" value="2"/>
</dbReference>
<dbReference type="Gene3D" id="3.40.50.10050">
    <property type="entry name" value="Translation initiation factor IF- 2, domain 3"/>
    <property type="match status" value="1"/>
</dbReference>
<dbReference type="HAMAP" id="MF_00100_B">
    <property type="entry name" value="IF_2_B"/>
    <property type="match status" value="1"/>
</dbReference>
<dbReference type="InterPro" id="IPR053905">
    <property type="entry name" value="EF-G-like_DII"/>
</dbReference>
<dbReference type="InterPro" id="IPR004161">
    <property type="entry name" value="EFTu-like_2"/>
</dbReference>
<dbReference type="InterPro" id="IPR044145">
    <property type="entry name" value="IF2_II"/>
</dbReference>
<dbReference type="InterPro" id="IPR006847">
    <property type="entry name" value="IF2_N"/>
</dbReference>
<dbReference type="InterPro" id="IPR027417">
    <property type="entry name" value="P-loop_NTPase"/>
</dbReference>
<dbReference type="InterPro" id="IPR005225">
    <property type="entry name" value="Small_GTP-bd"/>
</dbReference>
<dbReference type="InterPro" id="IPR000795">
    <property type="entry name" value="T_Tr_GTP-bd_dom"/>
</dbReference>
<dbReference type="InterPro" id="IPR000178">
    <property type="entry name" value="TF_IF2_bacterial-like"/>
</dbReference>
<dbReference type="InterPro" id="IPR015760">
    <property type="entry name" value="TIF_IF2"/>
</dbReference>
<dbReference type="InterPro" id="IPR023115">
    <property type="entry name" value="TIF_IF2_dom3"/>
</dbReference>
<dbReference type="InterPro" id="IPR036925">
    <property type="entry name" value="TIF_IF2_dom3_sf"/>
</dbReference>
<dbReference type="InterPro" id="IPR009000">
    <property type="entry name" value="Transl_B-barrel_sf"/>
</dbReference>
<dbReference type="NCBIfam" id="TIGR00487">
    <property type="entry name" value="IF-2"/>
    <property type="match status" value="1"/>
</dbReference>
<dbReference type="NCBIfam" id="TIGR00231">
    <property type="entry name" value="small_GTP"/>
    <property type="match status" value="1"/>
</dbReference>
<dbReference type="PANTHER" id="PTHR43381:SF5">
    <property type="entry name" value="TR-TYPE G DOMAIN-CONTAINING PROTEIN"/>
    <property type="match status" value="1"/>
</dbReference>
<dbReference type="PANTHER" id="PTHR43381">
    <property type="entry name" value="TRANSLATION INITIATION FACTOR IF-2-RELATED"/>
    <property type="match status" value="1"/>
</dbReference>
<dbReference type="Pfam" id="PF22042">
    <property type="entry name" value="EF-G_D2"/>
    <property type="match status" value="1"/>
</dbReference>
<dbReference type="Pfam" id="PF00009">
    <property type="entry name" value="GTP_EFTU"/>
    <property type="match status" value="1"/>
</dbReference>
<dbReference type="Pfam" id="PF03144">
    <property type="entry name" value="GTP_EFTU_D2"/>
    <property type="match status" value="1"/>
</dbReference>
<dbReference type="Pfam" id="PF11987">
    <property type="entry name" value="IF-2"/>
    <property type="match status" value="1"/>
</dbReference>
<dbReference type="Pfam" id="PF04760">
    <property type="entry name" value="IF2_N"/>
    <property type="match status" value="1"/>
</dbReference>
<dbReference type="SUPFAM" id="SSF52156">
    <property type="entry name" value="Initiation factor IF2/eIF5b, domain 3"/>
    <property type="match status" value="1"/>
</dbReference>
<dbReference type="SUPFAM" id="SSF52540">
    <property type="entry name" value="P-loop containing nucleoside triphosphate hydrolases"/>
    <property type="match status" value="1"/>
</dbReference>
<dbReference type="SUPFAM" id="SSF50447">
    <property type="entry name" value="Translation proteins"/>
    <property type="match status" value="2"/>
</dbReference>
<dbReference type="PROSITE" id="PS51722">
    <property type="entry name" value="G_TR_2"/>
    <property type="match status" value="1"/>
</dbReference>
<dbReference type="PROSITE" id="PS01176">
    <property type="entry name" value="IF2"/>
    <property type="match status" value="1"/>
</dbReference>
<gene>
    <name evidence="2" type="primary">infB</name>
    <name type="ordered locus">APP7_0680</name>
</gene>
<evidence type="ECO:0000250" key="1"/>
<evidence type="ECO:0000255" key="2">
    <source>
        <dbReference type="HAMAP-Rule" id="MF_00100"/>
    </source>
</evidence>
<evidence type="ECO:0000256" key="3">
    <source>
        <dbReference type="SAM" id="MobiDB-lite"/>
    </source>
</evidence>
<comment type="function">
    <text evidence="2">One of the essential components for the initiation of protein synthesis. Protects formylmethionyl-tRNA from spontaneous hydrolysis and promotes its binding to the 30S ribosomal subunits. Also involved in the hydrolysis of GTP during the formation of the 70S ribosomal complex.</text>
</comment>
<comment type="subcellular location">
    <subcellularLocation>
        <location evidence="2">Cytoplasm</location>
    </subcellularLocation>
</comment>
<comment type="similarity">
    <text evidence="2">Belongs to the TRAFAC class translation factor GTPase superfamily. Classic translation factor GTPase family. IF-2 subfamily.</text>
</comment>
<accession>B3H163</accession>
<feature type="chain" id="PRO_1000093752" description="Translation initiation factor IF-2">
    <location>
        <begin position="1"/>
        <end position="841"/>
    </location>
</feature>
<feature type="domain" description="tr-type G">
    <location>
        <begin position="340"/>
        <end position="510"/>
    </location>
</feature>
<feature type="region of interest" description="Disordered" evidence="3">
    <location>
        <begin position="1"/>
        <end position="24"/>
    </location>
</feature>
<feature type="region of interest" description="Disordered" evidence="3">
    <location>
        <begin position="52"/>
        <end position="246"/>
    </location>
</feature>
<feature type="region of interest" description="G1" evidence="1">
    <location>
        <begin position="349"/>
        <end position="356"/>
    </location>
</feature>
<feature type="region of interest" description="G2" evidence="1">
    <location>
        <begin position="374"/>
        <end position="378"/>
    </location>
</feature>
<feature type="region of interest" description="G3" evidence="1">
    <location>
        <begin position="396"/>
        <end position="399"/>
    </location>
</feature>
<feature type="region of interest" description="G4" evidence="1">
    <location>
        <begin position="450"/>
        <end position="453"/>
    </location>
</feature>
<feature type="region of interest" description="G5" evidence="1">
    <location>
        <begin position="486"/>
        <end position="488"/>
    </location>
</feature>
<feature type="compositionally biased region" description="Basic and acidic residues" evidence="3">
    <location>
        <begin position="1"/>
        <end position="12"/>
    </location>
</feature>
<feature type="compositionally biased region" description="Basic and acidic residues" evidence="3">
    <location>
        <begin position="52"/>
        <end position="92"/>
    </location>
</feature>
<feature type="compositionally biased region" description="Basic and acidic residues" evidence="3">
    <location>
        <begin position="114"/>
        <end position="170"/>
    </location>
</feature>
<feature type="compositionally biased region" description="Basic and acidic residues" evidence="3">
    <location>
        <begin position="188"/>
        <end position="202"/>
    </location>
</feature>
<feature type="compositionally biased region" description="Basic and acidic residues" evidence="3">
    <location>
        <begin position="213"/>
        <end position="235"/>
    </location>
</feature>
<feature type="binding site" evidence="2">
    <location>
        <begin position="349"/>
        <end position="356"/>
    </location>
    <ligand>
        <name>GTP</name>
        <dbReference type="ChEBI" id="CHEBI:37565"/>
    </ligand>
</feature>
<feature type="binding site" evidence="2">
    <location>
        <begin position="396"/>
        <end position="400"/>
    </location>
    <ligand>
        <name>GTP</name>
        <dbReference type="ChEBI" id="CHEBI:37565"/>
    </ligand>
</feature>
<feature type="binding site" evidence="2">
    <location>
        <begin position="450"/>
        <end position="453"/>
    </location>
    <ligand>
        <name>GTP</name>
        <dbReference type="ChEBI" id="CHEBI:37565"/>
    </ligand>
</feature>
<reference key="1">
    <citation type="submission" date="2008-06" db="EMBL/GenBank/DDBJ databases">
        <title>Genome and proteome analysis of A. pleuropneumoniae serotype 7.</title>
        <authorList>
            <person name="Linke B."/>
            <person name="Buettner F."/>
            <person name="Martinez-Arias R."/>
            <person name="Goesmann A."/>
            <person name="Baltes N."/>
            <person name="Tegetmeyer H."/>
            <person name="Singh M."/>
            <person name="Gerlach G.F."/>
        </authorList>
    </citation>
    <scope>NUCLEOTIDE SEQUENCE [LARGE SCALE GENOMIC DNA]</scope>
    <source>
        <strain>AP76</strain>
    </source>
</reference>
<sequence>MSDNEIKNEAPKKLSLQRRTKTTVADGKVQVEVRKSRKIDTAAVKKAQEEAALKAKQEAEAKAQAEKTAAEQAKAEAEAAKKAEGAKVEATKKSAPAVPVMPNSKPKAAAPKAEQPKQEKALDPEKEAKKKEEAELRRKQEELARQKAEMEAKRAAENARRLAEIAREEAAENGEEFEDDRFTSSYAREADRDNDRRSEANRGRGKGGVNKAKKGDREDKNERNADRRNQKDVKGKGKNAKKGSALQQAFTKPVQVNKADVVIGETITVAELANKMAVKATEIIKTMMKMGEMVTINQVIDQETAQLVAEEMGHKVILRNENELEDAVMEDRDVDAEKVTRAPVVTIMGHVDHGKTSLLDYIRKAKVAAGEAGGITQHIGAYHVETEDGKMITFLDTPGHAAFTSMRARGAKATDIVVLVVAADDGVMPQTIEAIQHARAAGAPIVVAVNKIDKPEANPDRVEQELLQHEVVSEKFGGDVQFVPVSAKKGLGIDDLLEAILLQSEVLELTAVKEGMASGVVIESYLDKGRGPVATILVQSGTLNKGDIVLCGFEYGRVRAMRDENGKEVDSAGPSIPVEVLGLSGVPAAGDEATVVRDEKKAREVALFRQGKFREVKLARQQKAKLENMFSNMTAGDVAELNVIVKADVQGSVEAICQSLAELSTDEVKVKVVGSGVGGITETDATLAAASNAIMVGFNVRADASARRVIEAENIDLRYYSIIYELLNEIKAAMSGMLQPEFKQEIIGLAEVRDVFRHPKFGAIAGCMVTEGVVKRNNPIRVLRDNVVIFEGELESLRRFKDDVSEVRNGMECGIGVKNYNDVKVGDQIEVFEVVEVKRSI</sequence>
<protein>
    <recommendedName>
        <fullName evidence="2">Translation initiation factor IF-2</fullName>
    </recommendedName>
</protein>